<comment type="similarity">
    <text evidence="1">Belongs to the bacterial ribosomal protein bS21 family.</text>
</comment>
<accession>Q87B16</accession>
<gene>
    <name evidence="1" type="primary">rpsU</name>
    <name type="ordered locus">PD_1644</name>
</gene>
<dbReference type="EMBL" id="AE009442">
    <property type="protein sequence ID" value="AAO29484.1"/>
    <property type="molecule type" value="Genomic_DNA"/>
</dbReference>
<dbReference type="RefSeq" id="WP_004089809.1">
    <property type="nucleotide sequence ID" value="NC_004556.1"/>
</dbReference>
<dbReference type="SMR" id="Q87B16"/>
<dbReference type="GeneID" id="93905478"/>
<dbReference type="KEGG" id="xft:PD_1644"/>
<dbReference type="HOGENOM" id="CLU_159258_1_0_6"/>
<dbReference type="Proteomes" id="UP000002516">
    <property type="component" value="Chromosome"/>
</dbReference>
<dbReference type="GO" id="GO:1990904">
    <property type="term" value="C:ribonucleoprotein complex"/>
    <property type="evidence" value="ECO:0007669"/>
    <property type="project" value="UniProtKB-KW"/>
</dbReference>
<dbReference type="GO" id="GO:0005840">
    <property type="term" value="C:ribosome"/>
    <property type="evidence" value="ECO:0007669"/>
    <property type="project" value="UniProtKB-KW"/>
</dbReference>
<dbReference type="GO" id="GO:0003735">
    <property type="term" value="F:structural constituent of ribosome"/>
    <property type="evidence" value="ECO:0007669"/>
    <property type="project" value="InterPro"/>
</dbReference>
<dbReference type="GO" id="GO:0006412">
    <property type="term" value="P:translation"/>
    <property type="evidence" value="ECO:0007669"/>
    <property type="project" value="UniProtKB-UniRule"/>
</dbReference>
<dbReference type="Gene3D" id="1.20.5.1150">
    <property type="entry name" value="Ribosomal protein S8"/>
    <property type="match status" value="1"/>
</dbReference>
<dbReference type="HAMAP" id="MF_00358">
    <property type="entry name" value="Ribosomal_bS21"/>
    <property type="match status" value="1"/>
</dbReference>
<dbReference type="InterPro" id="IPR001911">
    <property type="entry name" value="Ribosomal_bS21"/>
</dbReference>
<dbReference type="InterPro" id="IPR018278">
    <property type="entry name" value="Ribosomal_bS21_CS"/>
</dbReference>
<dbReference type="InterPro" id="IPR038380">
    <property type="entry name" value="Ribosomal_bS21_sf"/>
</dbReference>
<dbReference type="NCBIfam" id="TIGR00030">
    <property type="entry name" value="S21p"/>
    <property type="match status" value="1"/>
</dbReference>
<dbReference type="PANTHER" id="PTHR21109">
    <property type="entry name" value="MITOCHONDRIAL 28S RIBOSOMAL PROTEIN S21"/>
    <property type="match status" value="1"/>
</dbReference>
<dbReference type="PANTHER" id="PTHR21109:SF22">
    <property type="entry name" value="SMALL RIBOSOMAL SUBUNIT PROTEIN BS21"/>
    <property type="match status" value="1"/>
</dbReference>
<dbReference type="Pfam" id="PF01165">
    <property type="entry name" value="Ribosomal_S21"/>
    <property type="match status" value="1"/>
</dbReference>
<dbReference type="PRINTS" id="PR00976">
    <property type="entry name" value="RIBOSOMALS21"/>
</dbReference>
<dbReference type="PROSITE" id="PS01181">
    <property type="entry name" value="RIBOSOMAL_S21"/>
    <property type="match status" value="1"/>
</dbReference>
<keyword id="KW-1185">Reference proteome</keyword>
<keyword id="KW-0687">Ribonucleoprotein</keyword>
<keyword id="KW-0689">Ribosomal protein</keyword>
<name>RS21_XYLFT</name>
<evidence type="ECO:0000255" key="1">
    <source>
        <dbReference type="HAMAP-Rule" id="MF_00358"/>
    </source>
</evidence>
<evidence type="ECO:0000256" key="2">
    <source>
        <dbReference type="SAM" id="MobiDB-lite"/>
    </source>
</evidence>
<evidence type="ECO:0000305" key="3"/>
<reference key="1">
    <citation type="journal article" date="2003" name="J. Bacteriol.">
        <title>Comparative analyses of the complete genome sequences of Pierce's disease and citrus variegated chlorosis strains of Xylella fastidiosa.</title>
        <authorList>
            <person name="Van Sluys M.A."/>
            <person name="de Oliveira M.C."/>
            <person name="Monteiro-Vitorello C.B."/>
            <person name="Miyaki C.Y."/>
            <person name="Furlan L.R."/>
            <person name="Camargo L.E.A."/>
            <person name="da Silva A.C.R."/>
            <person name="Moon D.H."/>
            <person name="Takita M.A."/>
            <person name="Lemos E.G.M."/>
            <person name="Machado M.A."/>
            <person name="Ferro M.I.T."/>
            <person name="da Silva F.R."/>
            <person name="Goldman M.H.S."/>
            <person name="Goldman G.H."/>
            <person name="Lemos M.V.F."/>
            <person name="El-Dorry H."/>
            <person name="Tsai S.M."/>
            <person name="Carrer H."/>
            <person name="Carraro D.M."/>
            <person name="de Oliveira R.C."/>
            <person name="Nunes L.R."/>
            <person name="Siqueira W.J."/>
            <person name="Coutinho L.L."/>
            <person name="Kimura E.T."/>
            <person name="Ferro E.S."/>
            <person name="Harakava R."/>
            <person name="Kuramae E.E."/>
            <person name="Marino C.L."/>
            <person name="Giglioti E."/>
            <person name="Abreu I.L."/>
            <person name="Alves L.M.C."/>
            <person name="do Amaral A.M."/>
            <person name="Baia G.S."/>
            <person name="Blanco S.R."/>
            <person name="Brito M.S."/>
            <person name="Cannavan F.S."/>
            <person name="Celestino A.V."/>
            <person name="da Cunha A.F."/>
            <person name="Fenille R.C."/>
            <person name="Ferro J.A."/>
            <person name="Formighieri E.F."/>
            <person name="Kishi L.T."/>
            <person name="Leoni S.G."/>
            <person name="Oliveira A.R."/>
            <person name="Rosa V.E. Jr."/>
            <person name="Sassaki F.T."/>
            <person name="Sena J.A.D."/>
            <person name="de Souza A.A."/>
            <person name="Truffi D."/>
            <person name="Tsukumo F."/>
            <person name="Yanai G.M."/>
            <person name="Zaros L.G."/>
            <person name="Civerolo E.L."/>
            <person name="Simpson A.J.G."/>
            <person name="Almeida N.F. Jr."/>
            <person name="Setubal J.C."/>
            <person name="Kitajima J.P."/>
        </authorList>
    </citation>
    <scope>NUCLEOTIDE SEQUENCE [LARGE SCALE GENOMIC DNA]</scope>
    <source>
        <strain>Temecula1 / ATCC 700964</strain>
    </source>
</reference>
<proteinExistence type="inferred from homology"/>
<feature type="chain" id="PRO_0000178408" description="Small ribosomal subunit protein bS21">
    <location>
        <begin position="1"/>
        <end position="71"/>
    </location>
</feature>
<feature type="region of interest" description="Disordered" evidence="2">
    <location>
        <begin position="40"/>
        <end position="71"/>
    </location>
</feature>
<feature type="compositionally biased region" description="Basic residues" evidence="2">
    <location>
        <begin position="45"/>
        <end position="71"/>
    </location>
</feature>
<sequence>MPSVKVRENEPFEFALRRFKRICEKAGILAETRKREFYEKPTQERKRKAAAAVKRNIRRTSRDVTKRKRLY</sequence>
<protein>
    <recommendedName>
        <fullName evidence="1">Small ribosomal subunit protein bS21</fullName>
    </recommendedName>
    <alternativeName>
        <fullName evidence="3">30S ribosomal protein S21</fullName>
    </alternativeName>
</protein>
<organism>
    <name type="scientific">Xylella fastidiosa (strain Temecula1 / ATCC 700964)</name>
    <dbReference type="NCBI Taxonomy" id="183190"/>
    <lineage>
        <taxon>Bacteria</taxon>
        <taxon>Pseudomonadati</taxon>
        <taxon>Pseudomonadota</taxon>
        <taxon>Gammaproteobacteria</taxon>
        <taxon>Lysobacterales</taxon>
        <taxon>Lysobacteraceae</taxon>
        <taxon>Xylella</taxon>
    </lineage>
</organism>